<sequence length="209" mass="23725">MADFYYLPGSSPCRSVIMTAKAVGVELNKKLLNLQAGEHLKPEFLKINPQHTIPTLVDNGFALWESRAIQVYLVEKYGKTDSLYPKCPKKRAVINQRLYFDMGTLYQSFANYYYPQVFAKAPADPEAFKKIEAAFEFLNTFLEGQDYAAGDSLTVADIALVASVSTFEVAGFEISKYANVNKWYENAKKVTPGWEENWAGCLEFKKYFE</sequence>
<accession>P30108</accession>
<accession>B4PNR1</accession>
<dbReference type="EC" id="2.5.1.18"/>
<dbReference type="EMBL" id="CM000160">
    <property type="protein sequence ID" value="EDW97076.1"/>
    <property type="molecule type" value="Genomic_DNA"/>
</dbReference>
<dbReference type="EMBL" id="M84580">
    <property type="status" value="NOT_ANNOTATED_CDS"/>
    <property type="molecule type" value="Genomic_DNA"/>
</dbReference>
<dbReference type="SMR" id="P30108"/>
<dbReference type="EnsemblMetazoa" id="FBtr0271045">
    <property type="protein sequence ID" value="FBpp0269537"/>
    <property type="gene ID" value="FBgn0013168"/>
</dbReference>
<dbReference type="EnsemblMetazoa" id="XM_002097328.3">
    <property type="protein sequence ID" value="XP_002097364.1"/>
    <property type="gene ID" value="LOC6536794"/>
</dbReference>
<dbReference type="GeneID" id="6536794"/>
<dbReference type="KEGG" id="dya:Dyak_GE24527"/>
<dbReference type="eggNOG" id="KOG0867">
    <property type="taxonomic scope" value="Eukaryota"/>
</dbReference>
<dbReference type="HOGENOM" id="CLU_011226_2_1_1"/>
<dbReference type="OMA" id="ESNTICR"/>
<dbReference type="OrthoDB" id="2309723at2759"/>
<dbReference type="PhylomeDB" id="P30108"/>
<dbReference type="ChiTaRS" id="GstS1">
    <property type="organism name" value="fly"/>
</dbReference>
<dbReference type="Proteomes" id="UP000002282">
    <property type="component" value="Chromosome 3R"/>
</dbReference>
<dbReference type="GO" id="GO:0018833">
    <property type="term" value="F:DDT-dehydrochlorinase activity"/>
    <property type="evidence" value="ECO:0007669"/>
    <property type="project" value="EnsemblMetazoa"/>
</dbReference>
<dbReference type="GO" id="GO:0004602">
    <property type="term" value="F:glutathione peroxidase activity"/>
    <property type="evidence" value="ECO:0007669"/>
    <property type="project" value="EnsemblMetazoa"/>
</dbReference>
<dbReference type="GO" id="GO:0004364">
    <property type="term" value="F:glutathione transferase activity"/>
    <property type="evidence" value="ECO:0007669"/>
    <property type="project" value="UniProtKB-EC"/>
</dbReference>
<dbReference type="GO" id="GO:0006749">
    <property type="term" value="P:glutathione metabolic process"/>
    <property type="evidence" value="ECO:0007669"/>
    <property type="project" value="EnsemblMetazoa"/>
</dbReference>
<dbReference type="CDD" id="cd03177">
    <property type="entry name" value="GST_C_Delta_Epsilon"/>
    <property type="match status" value="1"/>
</dbReference>
<dbReference type="CDD" id="cd03045">
    <property type="entry name" value="GST_N_Delta_Epsilon"/>
    <property type="match status" value="1"/>
</dbReference>
<dbReference type="FunFam" id="3.40.30.10:FF:000034">
    <property type="entry name" value="glutathione S-transferase 1"/>
    <property type="match status" value="1"/>
</dbReference>
<dbReference type="FunFam" id="1.20.1050.10:FF:000007">
    <property type="entry name" value="Glutathione S-transferase 1-1"/>
    <property type="match status" value="1"/>
</dbReference>
<dbReference type="Gene3D" id="1.20.1050.10">
    <property type="match status" value="1"/>
</dbReference>
<dbReference type="Gene3D" id="3.40.30.10">
    <property type="entry name" value="Glutaredoxin"/>
    <property type="match status" value="1"/>
</dbReference>
<dbReference type="InterPro" id="IPR010987">
    <property type="entry name" value="Glutathione-S-Trfase_C-like"/>
</dbReference>
<dbReference type="InterPro" id="IPR036282">
    <property type="entry name" value="Glutathione-S-Trfase_C_sf"/>
</dbReference>
<dbReference type="InterPro" id="IPR004045">
    <property type="entry name" value="Glutathione_S-Trfase_N"/>
</dbReference>
<dbReference type="InterPro" id="IPR004046">
    <property type="entry name" value="GST_C"/>
</dbReference>
<dbReference type="InterPro" id="IPR036249">
    <property type="entry name" value="Thioredoxin-like_sf"/>
</dbReference>
<dbReference type="PANTHER" id="PTHR43969">
    <property type="entry name" value="GLUTATHIONE S TRANSFERASE D10, ISOFORM A-RELATED"/>
    <property type="match status" value="1"/>
</dbReference>
<dbReference type="PANTHER" id="PTHR43969:SF9">
    <property type="entry name" value="GLUTATHIONE S TRANSFERASE D10, ISOFORM A-RELATED"/>
    <property type="match status" value="1"/>
</dbReference>
<dbReference type="Pfam" id="PF00043">
    <property type="entry name" value="GST_C"/>
    <property type="match status" value="1"/>
</dbReference>
<dbReference type="Pfam" id="PF02798">
    <property type="entry name" value="GST_N"/>
    <property type="match status" value="1"/>
</dbReference>
<dbReference type="SFLD" id="SFLDG01153">
    <property type="entry name" value="Main.4:_Theta-like"/>
    <property type="match status" value="1"/>
</dbReference>
<dbReference type="SFLD" id="SFLDG00358">
    <property type="entry name" value="Main_(cytGST)"/>
    <property type="match status" value="1"/>
</dbReference>
<dbReference type="SUPFAM" id="SSF47616">
    <property type="entry name" value="GST C-terminal domain-like"/>
    <property type="match status" value="1"/>
</dbReference>
<dbReference type="SUPFAM" id="SSF52833">
    <property type="entry name" value="Thioredoxin-like"/>
    <property type="match status" value="1"/>
</dbReference>
<dbReference type="PROSITE" id="PS50405">
    <property type="entry name" value="GST_CTER"/>
    <property type="match status" value="1"/>
</dbReference>
<dbReference type="PROSITE" id="PS50404">
    <property type="entry name" value="GST_NTER"/>
    <property type="match status" value="1"/>
</dbReference>
<name>GSTT1_DROYA</name>
<proteinExistence type="inferred from homology"/>
<reference key="1">
    <citation type="journal article" date="2007" name="Nature">
        <title>Evolution of genes and genomes on the Drosophila phylogeny.</title>
        <authorList>
            <consortium name="Drosophila 12 genomes consortium"/>
        </authorList>
    </citation>
    <scope>NUCLEOTIDE SEQUENCE [LARGE SCALE GENOMIC DNA]</scope>
    <source>
        <strain>Tai18E2 / Tucson 14021-0261.01</strain>
    </source>
</reference>
<reference key="2">
    <citation type="submission" date="1992-02" db="EMBL/GenBank/DDBJ databases">
        <title>Sequence divergence of glutathione S-transferase coding regions among seven species in the melanogaster subgroup of Drosophila.</title>
        <authorList>
            <person name="Hargis M.T."/>
            <person name="Cochrane B.J."/>
        </authorList>
    </citation>
    <scope>NUCLEOTIDE SEQUENCE [GENOMIC DNA] OF 9-208</scope>
</reference>
<gene>
    <name type="primary">GstD1</name>
    <name type="synonym">GST</name>
    <name type="synonym">Gst1</name>
    <name type="ORF">GE24527</name>
</gene>
<feature type="chain" id="PRO_0000185953" description="Glutathione S-transferase 1-1">
    <location>
        <begin position="1"/>
        <end position="209"/>
    </location>
</feature>
<feature type="domain" description="GST N-terminal">
    <location>
        <begin position="1"/>
        <end position="81"/>
    </location>
</feature>
<feature type="domain" description="GST C-terminal">
    <location>
        <begin position="87"/>
        <end position="209"/>
    </location>
</feature>
<feature type="binding site" evidence="1">
    <location>
        <begin position="51"/>
        <end position="53"/>
    </location>
    <ligand>
        <name>glutathione</name>
        <dbReference type="ChEBI" id="CHEBI:57925"/>
    </ligand>
</feature>
<feature type="binding site" evidence="1">
    <location>
        <begin position="65"/>
        <end position="67"/>
    </location>
    <ligand>
        <name>glutathione</name>
        <dbReference type="ChEBI" id="CHEBI:57925"/>
    </ligand>
</feature>
<feature type="sequence conflict" description="In Ref. 2; M84580." evidence="2" ref="2">
    <original>E</original>
    <variation>S</variation>
    <location>
        <position position="195"/>
    </location>
</feature>
<keyword id="KW-0808">Transferase</keyword>
<organism>
    <name type="scientific">Drosophila yakuba</name>
    <name type="common">Fruit fly</name>
    <dbReference type="NCBI Taxonomy" id="7245"/>
    <lineage>
        <taxon>Eukaryota</taxon>
        <taxon>Metazoa</taxon>
        <taxon>Ecdysozoa</taxon>
        <taxon>Arthropoda</taxon>
        <taxon>Hexapoda</taxon>
        <taxon>Insecta</taxon>
        <taxon>Pterygota</taxon>
        <taxon>Neoptera</taxon>
        <taxon>Endopterygota</taxon>
        <taxon>Diptera</taxon>
        <taxon>Brachycera</taxon>
        <taxon>Muscomorpha</taxon>
        <taxon>Ephydroidea</taxon>
        <taxon>Drosophilidae</taxon>
        <taxon>Drosophila</taxon>
        <taxon>Sophophora</taxon>
    </lineage>
</organism>
<protein>
    <recommendedName>
        <fullName>Glutathione S-transferase 1-1</fullName>
        <ecNumber>2.5.1.18</ecNumber>
    </recommendedName>
    <alternativeName>
        <fullName>GST class-theta</fullName>
    </alternativeName>
</protein>
<evidence type="ECO:0000250" key="1"/>
<evidence type="ECO:0000305" key="2"/>
<comment type="function">
    <text>Conjugation of reduced glutathione to a wide number of exogenous and endogenous hydrophobic electrophiles.</text>
</comment>
<comment type="catalytic activity">
    <reaction>
        <text>RX + glutathione = an S-substituted glutathione + a halide anion + H(+)</text>
        <dbReference type="Rhea" id="RHEA:16437"/>
        <dbReference type="ChEBI" id="CHEBI:15378"/>
        <dbReference type="ChEBI" id="CHEBI:16042"/>
        <dbReference type="ChEBI" id="CHEBI:17792"/>
        <dbReference type="ChEBI" id="CHEBI:57925"/>
        <dbReference type="ChEBI" id="CHEBI:90779"/>
        <dbReference type="EC" id="2.5.1.18"/>
    </reaction>
</comment>
<comment type="subunit">
    <text>Homodimer.</text>
</comment>
<comment type="similarity">
    <text evidence="2">Belongs to the GST superfamily. Theta family.</text>
</comment>